<dbReference type="EC" id="2.3.2.6" evidence="1"/>
<dbReference type="EMBL" id="CP000661">
    <property type="protein sequence ID" value="ABP70347.1"/>
    <property type="molecule type" value="Genomic_DNA"/>
</dbReference>
<dbReference type="SMR" id="A4WSI3"/>
<dbReference type="STRING" id="349102.Rsph17025_1453"/>
<dbReference type="KEGG" id="rsq:Rsph17025_1453"/>
<dbReference type="eggNOG" id="COG2360">
    <property type="taxonomic scope" value="Bacteria"/>
</dbReference>
<dbReference type="HOGENOM" id="CLU_075045_1_1_5"/>
<dbReference type="BioCyc" id="RSPH349102:G1G8M-1494-MONOMER"/>
<dbReference type="GO" id="GO:0005737">
    <property type="term" value="C:cytoplasm"/>
    <property type="evidence" value="ECO:0007669"/>
    <property type="project" value="UniProtKB-SubCell"/>
</dbReference>
<dbReference type="GO" id="GO:0008914">
    <property type="term" value="F:leucyl-tRNA--protein transferase activity"/>
    <property type="evidence" value="ECO:0007669"/>
    <property type="project" value="UniProtKB-UniRule"/>
</dbReference>
<dbReference type="GO" id="GO:0030163">
    <property type="term" value="P:protein catabolic process"/>
    <property type="evidence" value="ECO:0007669"/>
    <property type="project" value="UniProtKB-UniRule"/>
</dbReference>
<dbReference type="FunFam" id="3.40.630.70:FF:000001">
    <property type="entry name" value="Leucyl/phenylalanyl-tRNA--protein transferase"/>
    <property type="match status" value="1"/>
</dbReference>
<dbReference type="Gene3D" id="3.40.630.70">
    <property type="entry name" value="Leucyl/phenylalanyl-tRNA-protein transferase, C-terminal domain"/>
    <property type="match status" value="1"/>
</dbReference>
<dbReference type="HAMAP" id="MF_00688">
    <property type="entry name" value="Leu_Phe_trans"/>
    <property type="match status" value="1"/>
</dbReference>
<dbReference type="InterPro" id="IPR016181">
    <property type="entry name" value="Acyl_CoA_acyltransferase"/>
</dbReference>
<dbReference type="InterPro" id="IPR004616">
    <property type="entry name" value="Leu/Phe-tRNA_Trfase"/>
</dbReference>
<dbReference type="InterPro" id="IPR042203">
    <property type="entry name" value="Leu/Phe-tRNA_Trfase_C"/>
</dbReference>
<dbReference type="NCBIfam" id="TIGR00667">
    <property type="entry name" value="aat"/>
    <property type="match status" value="1"/>
</dbReference>
<dbReference type="PANTHER" id="PTHR30098">
    <property type="entry name" value="LEUCYL/PHENYLALANYL-TRNA--PROTEIN TRANSFERASE"/>
    <property type="match status" value="1"/>
</dbReference>
<dbReference type="PANTHER" id="PTHR30098:SF2">
    <property type="entry name" value="LEUCYL_PHENYLALANYL-TRNA--PROTEIN TRANSFERASE"/>
    <property type="match status" value="1"/>
</dbReference>
<dbReference type="Pfam" id="PF03588">
    <property type="entry name" value="Leu_Phe_trans"/>
    <property type="match status" value="1"/>
</dbReference>
<dbReference type="SUPFAM" id="SSF55729">
    <property type="entry name" value="Acyl-CoA N-acyltransferases (Nat)"/>
    <property type="match status" value="1"/>
</dbReference>
<sequence>MTPPALTPRLLLRAYALGIFPMAESRDDPEIHWVDPRRRGIFPLDGFHISRSLARRIRRMDWTVTVNEDFAGTVRACADRDDTWINPTIFRLYVGLHALGHAHSLEVREGDALVGGVYGVTLGRAFFGESMFSRRTDASKVALAFLIDRLRAGGFTLFDTQFLTPHLASLGAIEIPRADYHRRLGEALAGKAEFAPPGYSPDPASVVQRSSQTS</sequence>
<keyword id="KW-0012">Acyltransferase</keyword>
<keyword id="KW-0963">Cytoplasm</keyword>
<keyword id="KW-0808">Transferase</keyword>
<feature type="chain" id="PRO_1000045113" description="Leucyl/phenylalanyl-tRNA--protein transferase">
    <location>
        <begin position="1"/>
        <end position="214"/>
    </location>
</feature>
<feature type="region of interest" description="Disordered" evidence="2">
    <location>
        <begin position="194"/>
        <end position="214"/>
    </location>
</feature>
<reference key="1">
    <citation type="submission" date="2007-04" db="EMBL/GenBank/DDBJ databases">
        <title>Complete sequence of chromosome of Rhodobacter sphaeroides ATCC 17025.</title>
        <authorList>
            <consortium name="US DOE Joint Genome Institute"/>
            <person name="Copeland A."/>
            <person name="Lucas S."/>
            <person name="Lapidus A."/>
            <person name="Barry K."/>
            <person name="Detter J.C."/>
            <person name="Glavina del Rio T."/>
            <person name="Hammon N."/>
            <person name="Israni S."/>
            <person name="Dalin E."/>
            <person name="Tice H."/>
            <person name="Pitluck S."/>
            <person name="Chertkov O."/>
            <person name="Brettin T."/>
            <person name="Bruce D."/>
            <person name="Han C."/>
            <person name="Schmutz J."/>
            <person name="Larimer F."/>
            <person name="Land M."/>
            <person name="Hauser L."/>
            <person name="Kyrpides N."/>
            <person name="Kim E."/>
            <person name="Richardson P."/>
            <person name="Mackenzie C."/>
            <person name="Choudhary M."/>
            <person name="Donohue T.J."/>
            <person name="Kaplan S."/>
        </authorList>
    </citation>
    <scope>NUCLEOTIDE SEQUENCE [LARGE SCALE GENOMIC DNA]</scope>
    <source>
        <strain>ATCC 17025 / ATH 2.4.3</strain>
    </source>
</reference>
<protein>
    <recommendedName>
        <fullName evidence="1">Leucyl/phenylalanyl-tRNA--protein transferase</fullName>
        <ecNumber evidence="1">2.3.2.6</ecNumber>
    </recommendedName>
    <alternativeName>
        <fullName evidence="1">L/F-transferase</fullName>
    </alternativeName>
    <alternativeName>
        <fullName evidence="1">Leucyltransferase</fullName>
    </alternativeName>
    <alternativeName>
        <fullName evidence="1">Phenyalanyltransferase</fullName>
    </alternativeName>
</protein>
<evidence type="ECO:0000255" key="1">
    <source>
        <dbReference type="HAMAP-Rule" id="MF_00688"/>
    </source>
</evidence>
<evidence type="ECO:0000256" key="2">
    <source>
        <dbReference type="SAM" id="MobiDB-lite"/>
    </source>
</evidence>
<organism>
    <name type="scientific">Cereibacter sphaeroides (strain ATCC 17025 / ATH 2.4.3)</name>
    <name type="common">Rhodobacter sphaeroides</name>
    <dbReference type="NCBI Taxonomy" id="349102"/>
    <lineage>
        <taxon>Bacteria</taxon>
        <taxon>Pseudomonadati</taxon>
        <taxon>Pseudomonadota</taxon>
        <taxon>Alphaproteobacteria</taxon>
        <taxon>Rhodobacterales</taxon>
        <taxon>Paracoccaceae</taxon>
        <taxon>Cereibacter</taxon>
    </lineage>
</organism>
<name>LFTR_CERS5</name>
<accession>A4WSI3</accession>
<comment type="function">
    <text evidence="1">Functions in the N-end rule pathway of protein degradation where it conjugates Leu, Phe and, less efficiently, Met from aminoacyl-tRNAs to the N-termini of proteins containing an N-terminal arginine or lysine.</text>
</comment>
<comment type="catalytic activity">
    <reaction evidence="1">
        <text>N-terminal L-lysyl-[protein] + L-leucyl-tRNA(Leu) = N-terminal L-leucyl-L-lysyl-[protein] + tRNA(Leu) + H(+)</text>
        <dbReference type="Rhea" id="RHEA:12340"/>
        <dbReference type="Rhea" id="RHEA-COMP:9613"/>
        <dbReference type="Rhea" id="RHEA-COMP:9622"/>
        <dbReference type="Rhea" id="RHEA-COMP:12670"/>
        <dbReference type="Rhea" id="RHEA-COMP:12671"/>
        <dbReference type="ChEBI" id="CHEBI:15378"/>
        <dbReference type="ChEBI" id="CHEBI:65249"/>
        <dbReference type="ChEBI" id="CHEBI:78442"/>
        <dbReference type="ChEBI" id="CHEBI:78494"/>
        <dbReference type="ChEBI" id="CHEBI:133043"/>
        <dbReference type="EC" id="2.3.2.6"/>
    </reaction>
</comment>
<comment type="catalytic activity">
    <reaction evidence="1">
        <text>N-terminal L-arginyl-[protein] + L-leucyl-tRNA(Leu) = N-terminal L-leucyl-L-arginyl-[protein] + tRNA(Leu) + H(+)</text>
        <dbReference type="Rhea" id="RHEA:50416"/>
        <dbReference type="Rhea" id="RHEA-COMP:9613"/>
        <dbReference type="Rhea" id="RHEA-COMP:9622"/>
        <dbReference type="Rhea" id="RHEA-COMP:12672"/>
        <dbReference type="Rhea" id="RHEA-COMP:12673"/>
        <dbReference type="ChEBI" id="CHEBI:15378"/>
        <dbReference type="ChEBI" id="CHEBI:64719"/>
        <dbReference type="ChEBI" id="CHEBI:78442"/>
        <dbReference type="ChEBI" id="CHEBI:78494"/>
        <dbReference type="ChEBI" id="CHEBI:133044"/>
        <dbReference type="EC" id="2.3.2.6"/>
    </reaction>
</comment>
<comment type="catalytic activity">
    <reaction evidence="1">
        <text>L-phenylalanyl-tRNA(Phe) + an N-terminal L-alpha-aminoacyl-[protein] = an N-terminal L-phenylalanyl-L-alpha-aminoacyl-[protein] + tRNA(Phe)</text>
        <dbReference type="Rhea" id="RHEA:43632"/>
        <dbReference type="Rhea" id="RHEA-COMP:9668"/>
        <dbReference type="Rhea" id="RHEA-COMP:9699"/>
        <dbReference type="Rhea" id="RHEA-COMP:10636"/>
        <dbReference type="Rhea" id="RHEA-COMP:10637"/>
        <dbReference type="ChEBI" id="CHEBI:78442"/>
        <dbReference type="ChEBI" id="CHEBI:78531"/>
        <dbReference type="ChEBI" id="CHEBI:78597"/>
        <dbReference type="ChEBI" id="CHEBI:83561"/>
        <dbReference type="EC" id="2.3.2.6"/>
    </reaction>
</comment>
<comment type="subcellular location">
    <subcellularLocation>
        <location evidence="1">Cytoplasm</location>
    </subcellularLocation>
</comment>
<comment type="similarity">
    <text evidence="1">Belongs to the L/F-transferase family.</text>
</comment>
<proteinExistence type="inferred from homology"/>
<gene>
    <name evidence="1" type="primary">aat</name>
    <name type="ordered locus">Rsph17025_1453</name>
</gene>